<name>MED18_BOVIN</name>
<feature type="chain" id="PRO_0000304741" description="Mediator of RNA polymerase II transcription subunit 18">
    <location>
        <begin position="1"/>
        <end position="208"/>
    </location>
</feature>
<feature type="modified residue" description="Phosphoserine" evidence="2">
    <location>
        <position position="66"/>
    </location>
</feature>
<organism>
    <name type="scientific">Bos taurus</name>
    <name type="common">Bovine</name>
    <dbReference type="NCBI Taxonomy" id="9913"/>
    <lineage>
        <taxon>Eukaryota</taxon>
        <taxon>Metazoa</taxon>
        <taxon>Chordata</taxon>
        <taxon>Craniata</taxon>
        <taxon>Vertebrata</taxon>
        <taxon>Euteleostomi</taxon>
        <taxon>Mammalia</taxon>
        <taxon>Eutheria</taxon>
        <taxon>Laurasiatheria</taxon>
        <taxon>Artiodactyla</taxon>
        <taxon>Ruminantia</taxon>
        <taxon>Pecora</taxon>
        <taxon>Bovidae</taxon>
        <taxon>Bovinae</taxon>
        <taxon>Bos</taxon>
    </lineage>
</organism>
<proteinExistence type="evidence at transcript level"/>
<evidence type="ECO:0000250" key="1"/>
<evidence type="ECO:0000250" key="2">
    <source>
        <dbReference type="UniProtKB" id="Q9BUE0"/>
    </source>
</evidence>
<evidence type="ECO:0000305" key="3"/>
<keyword id="KW-0010">Activator</keyword>
<keyword id="KW-0539">Nucleus</keyword>
<keyword id="KW-0597">Phosphoprotein</keyword>
<keyword id="KW-1185">Reference proteome</keyword>
<keyword id="KW-0804">Transcription</keyword>
<keyword id="KW-0805">Transcription regulation</keyword>
<comment type="function">
    <text evidence="1">Component of the Mediator complex, a coactivator involved in the regulated transcription of nearly all RNA polymerase II-dependent genes. Mediator functions as a bridge to convey information from gene-specific regulatory proteins to the basal RNA polymerase II transcription machinery. Mediator is recruited to promoters by direct interactions with regulatory proteins and serves as a scaffold for the assembly of a functional preinitiation complex with RNA polymerase II and the general transcription factors (By similarity).</text>
</comment>
<comment type="subunit">
    <text evidence="1">Component of the Mediator complex, which is composed of MED1, MED4, MED6, MED7, MED8, MED9, MED10, MED11, MED12, MED13, MED13L, MED14, MED15, MED16, MED17, MED18, MED19, MED20, MED21, MED22, MED23, MED24, MED25, MED26, MED27, MED29, MED30, MED31, CCNC, CDK8 and CDC2L6/CDK11. The MED12, MED13, CCNC and CDK8 subunits form a distinct module termed the CDK8 module. Mediator containing the CDK8 module is less active than Mediator lacking this module in supporting transcriptional activation. Individual preparations of the Mediator complex lacking one or more distinct subunits have been variously termed ARC, CRSP, DRIP, PC2, SMCC and TRAP (By similarity).</text>
</comment>
<comment type="subcellular location">
    <subcellularLocation>
        <location evidence="3">Nucleus</location>
    </subcellularLocation>
</comment>
<comment type="similarity">
    <text evidence="3">Belongs to the Mediator complex subunit 18 family.</text>
</comment>
<sequence length="208" mass="23682">MEAPPVTMMPVTGGTINMMEYLLQGSVLDHSLESLIHRLRGLCDNMEPETFVDHEMVFLLKGQQASPFVLRARRSLDRAGAPWHLRYLGQPEMGDKNRHALVRNCVDIATSENLTDFLMEMGFRMDHEFVARGHLFRKGIMKIVVYKIFRILVPGNTDNTEALSLSYLVELSVVAPAGQDMVSDDMRNFAEQLKPLVHLEKIDPKRLM</sequence>
<reference key="1">
    <citation type="submission" date="2006-08" db="EMBL/GenBank/DDBJ databases">
        <authorList>
            <consortium name="NIH - Mammalian Gene Collection (MGC) project"/>
        </authorList>
    </citation>
    <scope>NUCLEOTIDE SEQUENCE [LARGE SCALE MRNA]</scope>
    <source>
        <strain>Hereford</strain>
        <tissue>Fetal liver</tissue>
    </source>
</reference>
<accession>Q0VCD4</accession>
<protein>
    <recommendedName>
        <fullName>Mediator of RNA polymerase II transcription subunit 18</fullName>
    </recommendedName>
    <alternativeName>
        <fullName>Mediator complex subunit 18</fullName>
    </alternativeName>
</protein>
<gene>
    <name type="primary">MED18</name>
</gene>
<dbReference type="EMBL" id="BC120223">
    <property type="protein sequence ID" value="AAI20224.1"/>
    <property type="molecule type" value="mRNA"/>
</dbReference>
<dbReference type="RefSeq" id="NP_001069703.1">
    <property type="nucleotide sequence ID" value="NM_001076235.2"/>
</dbReference>
<dbReference type="RefSeq" id="XP_005203285.1">
    <property type="nucleotide sequence ID" value="XM_005203228.5"/>
</dbReference>
<dbReference type="SMR" id="Q0VCD4"/>
<dbReference type="FunCoup" id="Q0VCD4">
    <property type="interactions" value="3447"/>
</dbReference>
<dbReference type="STRING" id="9913.ENSBTAP00000003468"/>
<dbReference type="PaxDb" id="9913-ENSBTAP00000003468"/>
<dbReference type="Ensembl" id="ENSBTAT00000003468.3">
    <property type="protein sequence ID" value="ENSBTAP00000003468.2"/>
    <property type="gene ID" value="ENSBTAG00000002678.4"/>
</dbReference>
<dbReference type="GeneID" id="540695"/>
<dbReference type="KEGG" id="bta:540695"/>
<dbReference type="CTD" id="54797"/>
<dbReference type="VEuPathDB" id="HostDB:ENSBTAG00000002678"/>
<dbReference type="VGNC" id="VGNC:31355">
    <property type="gene designation" value="MED18"/>
</dbReference>
<dbReference type="eggNOG" id="KOG3264">
    <property type="taxonomic scope" value="Eukaryota"/>
</dbReference>
<dbReference type="GeneTree" id="ENSGT00390000003312"/>
<dbReference type="HOGENOM" id="CLU_084570_0_0_1"/>
<dbReference type="InParanoid" id="Q0VCD4"/>
<dbReference type="OMA" id="ARGYMFR"/>
<dbReference type="OrthoDB" id="10018982at2759"/>
<dbReference type="TreeFam" id="TF313246"/>
<dbReference type="Proteomes" id="UP000009136">
    <property type="component" value="Chromosome 2"/>
</dbReference>
<dbReference type="Bgee" id="ENSBTAG00000002678">
    <property type="expression patterns" value="Expressed in oocyte and 107 other cell types or tissues"/>
</dbReference>
<dbReference type="GO" id="GO:0070847">
    <property type="term" value="C:core mediator complex"/>
    <property type="evidence" value="ECO:0000318"/>
    <property type="project" value="GO_Central"/>
</dbReference>
<dbReference type="GO" id="GO:0016592">
    <property type="term" value="C:mediator complex"/>
    <property type="evidence" value="ECO:0000318"/>
    <property type="project" value="GO_Central"/>
</dbReference>
<dbReference type="GO" id="GO:0003712">
    <property type="term" value="F:transcription coregulator activity"/>
    <property type="evidence" value="ECO:0000318"/>
    <property type="project" value="GO_Central"/>
</dbReference>
<dbReference type="GO" id="GO:0060261">
    <property type="term" value="P:positive regulation of transcription initiation by RNA polymerase II"/>
    <property type="evidence" value="ECO:0000318"/>
    <property type="project" value="GO_Central"/>
</dbReference>
<dbReference type="FunFam" id="2.40.320.10:FF:000001">
    <property type="entry name" value="Mediator of RNA polymerase II transcription subunit 18"/>
    <property type="match status" value="1"/>
</dbReference>
<dbReference type="Gene3D" id="2.40.320.10">
    <property type="entry name" value="Hypothetical Protein Pfu-838710-001"/>
    <property type="match status" value="1"/>
</dbReference>
<dbReference type="InterPro" id="IPR019095">
    <property type="entry name" value="Mediator_Med18"/>
</dbReference>
<dbReference type="PANTHER" id="PTHR13321:SF2">
    <property type="entry name" value="MEDIATOR OF RNA POLYMERASE II TRANSCRIPTION SUBUNIT 18"/>
    <property type="match status" value="1"/>
</dbReference>
<dbReference type="PANTHER" id="PTHR13321">
    <property type="entry name" value="MEDIATOR OF RNA POLYMERASE II TRANSCRIPTION, SUBUNIT 18"/>
    <property type="match status" value="1"/>
</dbReference>
<dbReference type="Pfam" id="PF09637">
    <property type="entry name" value="Med18"/>
    <property type="match status" value="1"/>
</dbReference>